<protein>
    <recommendedName>
        <fullName evidence="8">NADP-dependent mannitol dehydrogenase</fullName>
        <shortName evidence="8">MtDH</shortName>
        <ecNumber evidence="6">1.1.1.138</ecNumber>
    </recommendedName>
</protein>
<keyword id="KW-0521">NADP</keyword>
<keyword id="KW-0560">Oxidoreductase</keyword>
<dbReference type="EC" id="1.1.1.138" evidence="6"/>
<dbReference type="EMBL" id="MF370931">
    <property type="protein sequence ID" value="AST36438.1"/>
    <property type="molecule type" value="Genomic_DNA"/>
</dbReference>
<dbReference type="GO" id="GO:0050664">
    <property type="term" value="F:oxidoreductase activity, acting on NAD(P)H, oxygen as acceptor"/>
    <property type="evidence" value="ECO:0007669"/>
    <property type="project" value="TreeGrafter"/>
</dbReference>
<dbReference type="GO" id="GO:0016616">
    <property type="term" value="F:oxidoreductase activity, acting on the CH-OH group of donors, NAD or NADP as acceptor"/>
    <property type="evidence" value="ECO:0007669"/>
    <property type="project" value="UniProtKB-ARBA"/>
</dbReference>
<dbReference type="CDD" id="cd05352">
    <property type="entry name" value="MDH-like_SDR_c"/>
    <property type="match status" value="1"/>
</dbReference>
<dbReference type="FunFam" id="3.40.50.720:FF:000090">
    <property type="entry name" value="NADP-dependent mannitol dehydrogenase"/>
    <property type="match status" value="1"/>
</dbReference>
<dbReference type="Gene3D" id="3.40.50.720">
    <property type="entry name" value="NAD(P)-binding Rossmann-like Domain"/>
    <property type="match status" value="1"/>
</dbReference>
<dbReference type="InterPro" id="IPR036291">
    <property type="entry name" value="NAD(P)-bd_dom_sf"/>
</dbReference>
<dbReference type="InterPro" id="IPR002347">
    <property type="entry name" value="SDR_fam"/>
</dbReference>
<dbReference type="PANTHER" id="PTHR43008">
    <property type="entry name" value="BENZIL REDUCTASE"/>
    <property type="match status" value="1"/>
</dbReference>
<dbReference type="PANTHER" id="PTHR43008:SF3">
    <property type="entry name" value="MANNITOL DEHYDROGENASE"/>
    <property type="match status" value="1"/>
</dbReference>
<dbReference type="Pfam" id="PF13561">
    <property type="entry name" value="adh_short_C2"/>
    <property type="match status" value="1"/>
</dbReference>
<dbReference type="PRINTS" id="PR00081">
    <property type="entry name" value="GDHRDH"/>
</dbReference>
<dbReference type="SUPFAM" id="SSF51735">
    <property type="entry name" value="NAD(P)-binding Rossmann-fold domains"/>
    <property type="match status" value="1"/>
</dbReference>
<organism>
    <name type="scientific">Aureobasidium melanogenum</name>
    <name type="common">Aureobasidium pullulans var. melanogenum</name>
    <dbReference type="NCBI Taxonomy" id="46634"/>
    <lineage>
        <taxon>Eukaryota</taxon>
        <taxon>Fungi</taxon>
        <taxon>Dikarya</taxon>
        <taxon>Ascomycota</taxon>
        <taxon>Pezizomycotina</taxon>
        <taxon>Dothideomycetes</taxon>
        <taxon>Dothideomycetidae</taxon>
        <taxon>Dothideales</taxon>
        <taxon>Saccotheciaceae</taxon>
        <taxon>Aureobasidium</taxon>
    </lineage>
</organism>
<name>NMTDH_AURME</name>
<evidence type="ECO:0000250" key="1">
    <source>
        <dbReference type="UniProtKB" id="L0E2Z4"/>
    </source>
</evidence>
<evidence type="ECO:0000250" key="2">
    <source>
        <dbReference type="UniProtKB" id="O93868"/>
    </source>
</evidence>
<evidence type="ECO:0000250" key="3">
    <source>
        <dbReference type="UniProtKB" id="P0C0Y5"/>
    </source>
</evidence>
<evidence type="ECO:0000269" key="4">
    <source>
    </source>
</evidence>
<evidence type="ECO:0000269" key="5">
    <source>
    </source>
</evidence>
<evidence type="ECO:0000269" key="6">
    <source>
    </source>
</evidence>
<evidence type="ECO:0000269" key="7">
    <source>
    </source>
</evidence>
<evidence type="ECO:0000303" key="8">
    <source>
    </source>
</evidence>
<evidence type="ECO:0000305" key="9"/>
<evidence type="ECO:0000305" key="10">
    <source>
    </source>
</evidence>
<proteinExistence type="evidence at protein level"/>
<feature type="chain" id="PRO_0000461623" description="NADP-dependent mannitol dehydrogenase">
    <location>
        <begin position="1"/>
        <end position="266"/>
    </location>
</feature>
<feature type="active site" description="Proton donor" evidence="3">
    <location>
        <position position="159"/>
    </location>
</feature>
<feature type="active site" description="Proton acceptor" evidence="3">
    <location>
        <position position="174"/>
    </location>
</feature>
<feature type="active site" description="Lowers pKa of active site Tyr" evidence="3">
    <location>
        <position position="178"/>
    </location>
</feature>
<feature type="binding site" evidence="2">
    <location>
        <position position="107"/>
    </location>
    <ligand>
        <name>NADP(+)</name>
        <dbReference type="ChEBI" id="CHEBI:58349"/>
    </ligand>
</feature>
<feature type="binding site" evidence="1">
    <location>
        <position position="140"/>
    </location>
    <ligand>
        <name>NADP(+)</name>
        <dbReference type="ChEBI" id="CHEBI:58349"/>
    </ligand>
</feature>
<feature type="binding site" evidence="2">
    <location>
        <position position="174"/>
    </location>
    <ligand>
        <name>NADP(+)</name>
        <dbReference type="ChEBI" id="CHEBI:58349"/>
    </ligand>
</feature>
<feature type="binding site" evidence="2">
    <location>
        <position position="178"/>
    </location>
    <ligand>
        <name>NADP(+)</name>
        <dbReference type="ChEBI" id="CHEBI:58349"/>
    </ligand>
</feature>
<feature type="binding site" evidence="2">
    <location>
        <position position="206"/>
    </location>
    <ligand>
        <name>NADP(+)</name>
        <dbReference type="ChEBI" id="CHEBI:58349"/>
    </ligand>
</feature>
<feature type="binding site" evidence="1">
    <location>
        <position position="208"/>
    </location>
    <ligand>
        <name>NADP(+)</name>
        <dbReference type="ChEBI" id="CHEBI:58349"/>
    </ligand>
</feature>
<accession>A0A223HDI5</accession>
<comment type="function">
    <text evidence="6 10">Catalyzes the interconversion between D-mannitol and D-fructose (Probable). Plays a key role in liamocins biosynthesis by providing the mannitol moity that is linked to 3,5-dihydroxydecanoic acid (provided by the HR-PKS PKS1) via ester bond formation catalyzed by the esterase EST1 (PubMed:32003433).</text>
</comment>
<comment type="catalytic activity">
    <reaction evidence="10">
        <text>D-mannitol + NADP(+) = D-fructose + NADPH + H(+)</text>
        <dbReference type="Rhea" id="RHEA:16765"/>
        <dbReference type="ChEBI" id="CHEBI:15378"/>
        <dbReference type="ChEBI" id="CHEBI:16899"/>
        <dbReference type="ChEBI" id="CHEBI:37721"/>
        <dbReference type="ChEBI" id="CHEBI:57783"/>
        <dbReference type="ChEBI" id="CHEBI:58349"/>
        <dbReference type="EC" id="1.1.1.138"/>
    </reaction>
    <physiologicalReaction direction="left-to-right" evidence="10">
        <dbReference type="Rhea" id="RHEA:16766"/>
    </physiologicalReaction>
    <physiologicalReaction direction="right-to-left" evidence="10">
        <dbReference type="Rhea" id="RHEA:16767"/>
    </physiologicalReaction>
</comment>
<comment type="subunit">
    <text evidence="2">Homotetramer.</text>
</comment>
<comment type="induction">
    <text evidence="7">Expression is regulated by the cAMP-PKA and HOG1 signaling pathways via the transcriptional activator MSN2.</text>
</comment>
<comment type="disruption phenotype">
    <text evidence="6">Affects the ability to produce liamocins with a mannitol headgroup.</text>
</comment>
<comment type="biotechnology">
    <text evidence="4 5">Liamocins have high bioactivity against the pathogenic bacteria Streptococcus spp. and can be potential new specific inhibitors of oral streptococcal biofilms without affecting normal oral microflora (PubMed:30627519). Liamocins are also able to inhibit human cancer cell lines such as breast cancer cell lines T47D and SK-BR3 or the cervical cancer cell line HeLa (PubMed:21293903).</text>
</comment>
<comment type="similarity">
    <text evidence="9">Belongs to the short-chain dehydrogenases/reductases (SDR) family.</text>
</comment>
<reference key="1">
    <citation type="submission" date="2017-06" db="EMBL/GenBank/DDBJ databases">
        <authorList>
            <person name="Kim H.J."/>
            <person name="Triplett B.A."/>
        </authorList>
    </citation>
    <scope>NUCLEOTIDE SEQUENCE [GENOMIC DNA]</scope>
    <source>
        <strain>6-1-2</strain>
    </source>
</reference>
<reference key="2">
    <citation type="journal article" date="2011" name="Biotechnol. Lett.">
        <title>Heavy oils produced by Aureobasidium pullulans.</title>
        <authorList>
            <person name="Manitchotpisit P."/>
            <person name="Price N.P."/>
            <person name="Leathers T.D."/>
            <person name="Punnapayak H."/>
        </authorList>
    </citation>
    <scope>BIOTECHNOLOGY</scope>
</reference>
<reference key="3">
    <citation type="journal article" date="2019" name="Biotechnol. Rep.">
        <title>Inhibition of Streptococcus mutans and S. sobrinus biofilms by liamocins from Aureobasidium pullulans.</title>
        <authorList>
            <person name="Leathers T.D."/>
            <person name="Rich J.O."/>
            <person name="Bischoff K.M."/>
            <person name="Skory C.D."/>
            <person name="Nunnally M.S."/>
        </authorList>
    </citation>
    <scope>BIOTECHNOLOGY</scope>
</reference>
<reference key="4">
    <citation type="journal article" date="2020" name="Biochem. J.">
        <title>Genetic evidences for the core biosynthesis pathway, regulation, transport and secretion of liamocins in yeast-like fungal cells.</title>
        <authorList>
            <person name="Xue S.J."/>
            <person name="Liu G.L."/>
            <person name="Chi Z."/>
            <person name="Gao Z.C."/>
            <person name="Hu Z."/>
            <person name="Chi Z.M."/>
        </authorList>
    </citation>
    <scope>FUNCTION</scope>
    <scope>DISRUPTION PHENOTYPE</scope>
</reference>
<reference key="5">
    <citation type="journal article" date="2021" name="Enzyme Microb. Technol.">
        <title>cAMP-PKA and HOG1 signaling pathways regulate liamocin production by different ways via the transcriptional activator Msn2 in Aureobasidium melanogenum.</title>
        <authorList>
            <person name="Zhang M."/>
            <person name="Gao Z.C."/>
            <person name="Chi Z."/>
            <person name="Liu G.L."/>
            <person name="Hu Z."/>
            <person name="Chi Z.M."/>
        </authorList>
    </citation>
    <scope>INDUCTION</scope>
</reference>
<sequence>MPISIPKGEKLMDLLSMKGKVTIVTGASGPRGMGIEAARGIAEMGGNVALTYAGRKEGGEKNAAALEKEYGIKAKAYKLDVANYESCCQLVKDVIADFGQIDAFVANAGKTADSGVLDGEISAFEEVIQTDLLGVAYCAKAVGHHFKERQTGSFVITASMSGHIANFPQEQTSYNVAKAGCIHMARSLANEWRDFARVNSISPGYIDTGLSDFVDKETQKLWHSMIPMGRDGDAKELKAAYVYFCSDASTYTTGSDLVIDGGYCAR</sequence>